<keyword id="KW-0963">Cytoplasm</keyword>
<keyword id="KW-0489">Methyltransferase</keyword>
<keyword id="KW-0698">rRNA processing</keyword>
<keyword id="KW-0949">S-adenosyl-L-methionine</keyword>
<keyword id="KW-0808">Transferase</keyword>
<protein>
    <recommendedName>
        <fullName evidence="1">Ribosomal RNA small subunit methyltransferase H</fullName>
        <ecNumber evidence="1">2.1.1.199</ecNumber>
    </recommendedName>
    <alternativeName>
        <fullName evidence="1">16S rRNA m(4)C1402 methyltransferase</fullName>
    </alternativeName>
    <alternativeName>
        <fullName evidence="1">rRNA (cytosine-N(4)-)-methyltransferase RsmH</fullName>
    </alternativeName>
</protein>
<comment type="function">
    <text evidence="1">Specifically methylates the N4 position of cytidine in position 1402 (C1402) of 16S rRNA.</text>
</comment>
<comment type="catalytic activity">
    <reaction evidence="1">
        <text>cytidine(1402) in 16S rRNA + S-adenosyl-L-methionine = N(4)-methylcytidine(1402) in 16S rRNA + S-adenosyl-L-homocysteine + H(+)</text>
        <dbReference type="Rhea" id="RHEA:42928"/>
        <dbReference type="Rhea" id="RHEA-COMP:10286"/>
        <dbReference type="Rhea" id="RHEA-COMP:10287"/>
        <dbReference type="ChEBI" id="CHEBI:15378"/>
        <dbReference type="ChEBI" id="CHEBI:57856"/>
        <dbReference type="ChEBI" id="CHEBI:59789"/>
        <dbReference type="ChEBI" id="CHEBI:74506"/>
        <dbReference type="ChEBI" id="CHEBI:82748"/>
        <dbReference type="EC" id="2.1.1.199"/>
    </reaction>
</comment>
<comment type="subcellular location">
    <subcellularLocation>
        <location evidence="1">Cytoplasm</location>
    </subcellularLocation>
</comment>
<comment type="similarity">
    <text evidence="1">Belongs to the methyltransferase superfamily. RsmH family.</text>
</comment>
<accession>Q9AJH1</accession>
<reference key="1">
    <citation type="journal article" date="2001" name="FEMS Microbiol. Lett.">
        <title>Structures of ribonuclease P RNAs of Vibrio core species.</title>
        <authorList>
            <person name="Maeda T."/>
            <person name="Furushita M."/>
            <person name="Hamamura K."/>
            <person name="Shiba T."/>
        </authorList>
    </citation>
    <scope>NUCLEOTIDE SEQUENCE [GENOMIC DNA]</scope>
    <source>
        <strain>ATCC 17802 / DSM 10027 / NBRC 12711 / NCIMB 1902 / LMG 2850 / NCTC 10903</strain>
    </source>
</reference>
<reference key="2">
    <citation type="journal article" date="2003" name="Lancet">
        <title>Genome sequence of Vibrio parahaemolyticus: a pathogenic mechanism distinct from that of V. cholerae.</title>
        <authorList>
            <person name="Makino K."/>
            <person name="Oshima K."/>
            <person name="Kurokawa K."/>
            <person name="Yokoyama K."/>
            <person name="Uda T."/>
            <person name="Tagomori K."/>
            <person name="Iijima Y."/>
            <person name="Najima M."/>
            <person name="Nakano M."/>
            <person name="Yamashita A."/>
            <person name="Kubota Y."/>
            <person name="Kimura S."/>
            <person name="Yasunaga T."/>
            <person name="Honda T."/>
            <person name="Shinagawa H."/>
            <person name="Hattori M."/>
            <person name="Iida T."/>
        </authorList>
    </citation>
    <scope>NUCLEOTIDE SEQUENCE [LARGE SCALE GENOMIC DNA]</scope>
    <source>
        <strain>RIMD 2210633</strain>
    </source>
</reference>
<feature type="chain" id="PRO_0000108743" description="Ribosomal RNA small subunit methyltransferase H">
    <location>
        <begin position="1"/>
        <end position="316"/>
    </location>
</feature>
<feature type="binding site" evidence="1">
    <location>
        <begin position="35"/>
        <end position="37"/>
    </location>
    <ligand>
        <name>S-adenosyl-L-methionine</name>
        <dbReference type="ChEBI" id="CHEBI:59789"/>
    </ligand>
</feature>
<feature type="binding site" evidence="1">
    <location>
        <position position="55"/>
    </location>
    <ligand>
        <name>S-adenosyl-L-methionine</name>
        <dbReference type="ChEBI" id="CHEBI:59789"/>
    </ligand>
</feature>
<feature type="binding site" evidence="1">
    <location>
        <position position="79"/>
    </location>
    <ligand>
        <name>S-adenosyl-L-methionine</name>
        <dbReference type="ChEBI" id="CHEBI:59789"/>
    </ligand>
</feature>
<feature type="binding site" evidence="1">
    <location>
        <position position="101"/>
    </location>
    <ligand>
        <name>S-adenosyl-L-methionine</name>
        <dbReference type="ChEBI" id="CHEBI:59789"/>
    </ligand>
</feature>
<feature type="binding site" evidence="1">
    <location>
        <position position="108"/>
    </location>
    <ligand>
        <name>S-adenosyl-L-methionine</name>
        <dbReference type="ChEBI" id="CHEBI:59789"/>
    </ligand>
</feature>
<proteinExistence type="inferred from homology"/>
<name>RSMH_VIBPA</name>
<gene>
    <name evidence="1" type="primary">rsmH</name>
    <name type="synonym">mraW</name>
    <name type="ordered locus">VP0452</name>
</gene>
<dbReference type="EC" id="2.1.1.199" evidence="1"/>
<dbReference type="EMBL" id="AB047584">
    <property type="protein sequence ID" value="BAB40616.1"/>
    <property type="molecule type" value="Genomic_DNA"/>
</dbReference>
<dbReference type="EMBL" id="BA000031">
    <property type="protein sequence ID" value="BAC58715.1"/>
    <property type="molecule type" value="Genomic_DNA"/>
</dbReference>
<dbReference type="RefSeq" id="NP_796831.1">
    <property type="nucleotide sequence ID" value="NC_004603.1"/>
</dbReference>
<dbReference type="RefSeq" id="WP_005458168.1">
    <property type="nucleotide sequence ID" value="NC_004603.1"/>
</dbReference>
<dbReference type="SMR" id="Q9AJH1"/>
<dbReference type="GeneID" id="1187920"/>
<dbReference type="KEGG" id="vpa:VP0452"/>
<dbReference type="PATRIC" id="fig|223926.6.peg.430"/>
<dbReference type="eggNOG" id="COG0275">
    <property type="taxonomic scope" value="Bacteria"/>
</dbReference>
<dbReference type="HOGENOM" id="CLU_038422_2_0_6"/>
<dbReference type="Proteomes" id="UP000002493">
    <property type="component" value="Chromosome 1"/>
</dbReference>
<dbReference type="GO" id="GO:0005737">
    <property type="term" value="C:cytoplasm"/>
    <property type="evidence" value="ECO:0007669"/>
    <property type="project" value="UniProtKB-SubCell"/>
</dbReference>
<dbReference type="GO" id="GO:0071424">
    <property type="term" value="F:rRNA (cytosine-N4-)-methyltransferase activity"/>
    <property type="evidence" value="ECO:0007669"/>
    <property type="project" value="UniProtKB-UniRule"/>
</dbReference>
<dbReference type="GO" id="GO:0070475">
    <property type="term" value="P:rRNA base methylation"/>
    <property type="evidence" value="ECO:0007669"/>
    <property type="project" value="UniProtKB-UniRule"/>
</dbReference>
<dbReference type="FunFam" id="1.10.150.170:FF:000001">
    <property type="entry name" value="Ribosomal RNA small subunit methyltransferase H"/>
    <property type="match status" value="1"/>
</dbReference>
<dbReference type="Gene3D" id="1.10.150.170">
    <property type="entry name" value="Putative methyltransferase TM0872, insert domain"/>
    <property type="match status" value="1"/>
</dbReference>
<dbReference type="Gene3D" id="3.40.50.150">
    <property type="entry name" value="Vaccinia Virus protein VP39"/>
    <property type="match status" value="1"/>
</dbReference>
<dbReference type="HAMAP" id="MF_01007">
    <property type="entry name" value="16SrRNA_methyltr_H"/>
    <property type="match status" value="1"/>
</dbReference>
<dbReference type="InterPro" id="IPR002903">
    <property type="entry name" value="RsmH"/>
</dbReference>
<dbReference type="InterPro" id="IPR023397">
    <property type="entry name" value="SAM-dep_MeTrfase_MraW_recog"/>
</dbReference>
<dbReference type="InterPro" id="IPR029063">
    <property type="entry name" value="SAM-dependent_MTases_sf"/>
</dbReference>
<dbReference type="NCBIfam" id="TIGR00006">
    <property type="entry name" value="16S rRNA (cytosine(1402)-N(4))-methyltransferase RsmH"/>
    <property type="match status" value="1"/>
</dbReference>
<dbReference type="PANTHER" id="PTHR11265:SF0">
    <property type="entry name" value="12S RRNA N4-METHYLCYTIDINE METHYLTRANSFERASE"/>
    <property type="match status" value="1"/>
</dbReference>
<dbReference type="PANTHER" id="PTHR11265">
    <property type="entry name" value="S-ADENOSYL-METHYLTRANSFERASE MRAW"/>
    <property type="match status" value="1"/>
</dbReference>
<dbReference type="Pfam" id="PF01795">
    <property type="entry name" value="Methyltransf_5"/>
    <property type="match status" value="1"/>
</dbReference>
<dbReference type="PIRSF" id="PIRSF004486">
    <property type="entry name" value="MraW"/>
    <property type="match status" value="1"/>
</dbReference>
<dbReference type="SUPFAM" id="SSF81799">
    <property type="entry name" value="Putative methyltransferase TM0872, insert domain"/>
    <property type="match status" value="1"/>
</dbReference>
<dbReference type="SUPFAM" id="SSF53335">
    <property type="entry name" value="S-adenosyl-L-methionine-dependent methyltransferases"/>
    <property type="match status" value="1"/>
</dbReference>
<organism>
    <name type="scientific">Vibrio parahaemolyticus serotype O3:K6 (strain RIMD 2210633)</name>
    <dbReference type="NCBI Taxonomy" id="223926"/>
    <lineage>
        <taxon>Bacteria</taxon>
        <taxon>Pseudomonadati</taxon>
        <taxon>Pseudomonadota</taxon>
        <taxon>Gammaproteobacteria</taxon>
        <taxon>Vibrionales</taxon>
        <taxon>Vibrionaceae</taxon>
        <taxon>Vibrio</taxon>
    </lineage>
</organism>
<evidence type="ECO:0000255" key="1">
    <source>
        <dbReference type="HAMAP-Rule" id="MF_01007"/>
    </source>
</evidence>
<sequence length="316" mass="35214">MTETFQHISVLLNESIDGLAIKPDGIYIDGTFGRGGHSRTILSKLGPNGRLYSIDRDPQAIAEAGKIDDPRFTIIHGPFSGMAQYAEEYDLVGKVDGVLLDLGVSSPQLDDAERGFSFMKDGPLDMRMDPTSGIPVSQWLMEADLDDITWVIREFGEDKHARRIARAIVEYRENEENEPMVRTGQLAKLISEAAPKSFKEKKHPATRAFQAFRIYINSELEEIDTALKGAARILAPEGRLSVISFHSLEDRMVKRFIRKESKGPEVPHGIPLTEAQIKELGSANMKTVGKAIKPSKQEIDMNPRSRSSVLRIAEKL</sequence>